<evidence type="ECO:0000255" key="1">
    <source>
        <dbReference type="HAMAP-Rule" id="MF_00059"/>
    </source>
</evidence>
<evidence type="ECO:0000305" key="2">
    <source>
    </source>
</evidence>
<evidence type="ECO:0000305" key="3">
    <source>
    </source>
</evidence>
<name>RPOA_STRR6</name>
<proteinExistence type="evidence at protein level"/>
<feature type="chain" id="PRO_0000175395" description="DNA-directed RNA polymerase subunit alpha">
    <location>
        <begin position="1"/>
        <end position="311"/>
    </location>
</feature>
<feature type="region of interest" description="Alpha N-terminal domain (alpha-NTD)" evidence="1">
    <location>
        <begin position="1"/>
        <end position="226"/>
    </location>
</feature>
<feature type="region of interest" description="Alpha C-terminal domain (alpha-CTD)" evidence="1">
    <location>
        <begin position="243"/>
        <end position="311"/>
    </location>
</feature>
<organism>
    <name type="scientific">Streptococcus pneumoniae (strain ATCC BAA-255 / R6)</name>
    <dbReference type="NCBI Taxonomy" id="171101"/>
    <lineage>
        <taxon>Bacteria</taxon>
        <taxon>Bacillati</taxon>
        <taxon>Bacillota</taxon>
        <taxon>Bacilli</taxon>
        <taxon>Lactobacillales</taxon>
        <taxon>Streptococcaceae</taxon>
        <taxon>Streptococcus</taxon>
    </lineage>
</organism>
<accession>P66709</accession>
<accession>Q97ST7</accession>
<dbReference type="EC" id="2.7.7.6" evidence="1"/>
<dbReference type="EMBL" id="AE007317">
    <property type="protein sequence ID" value="AAK99019.1"/>
    <property type="molecule type" value="Genomic_DNA"/>
</dbReference>
<dbReference type="PIR" id="G97898">
    <property type="entry name" value="G97898"/>
</dbReference>
<dbReference type="RefSeq" id="NP_357809.1">
    <property type="nucleotide sequence ID" value="NC_003098.1"/>
</dbReference>
<dbReference type="RefSeq" id="WP_000568988.1">
    <property type="nucleotide sequence ID" value="NC_003098.1"/>
</dbReference>
<dbReference type="SMR" id="P66709"/>
<dbReference type="STRING" id="171101.spr0215"/>
<dbReference type="KEGG" id="spr:spr0215"/>
<dbReference type="PATRIC" id="fig|171101.6.peg.247"/>
<dbReference type="eggNOG" id="COG0202">
    <property type="taxonomic scope" value="Bacteria"/>
</dbReference>
<dbReference type="HOGENOM" id="CLU_053084_0_1_9"/>
<dbReference type="Proteomes" id="UP000000586">
    <property type="component" value="Chromosome"/>
</dbReference>
<dbReference type="GO" id="GO:0005737">
    <property type="term" value="C:cytoplasm"/>
    <property type="evidence" value="ECO:0000318"/>
    <property type="project" value="GO_Central"/>
</dbReference>
<dbReference type="GO" id="GO:0000428">
    <property type="term" value="C:DNA-directed RNA polymerase complex"/>
    <property type="evidence" value="ECO:0007669"/>
    <property type="project" value="UniProtKB-KW"/>
</dbReference>
<dbReference type="GO" id="GO:0003677">
    <property type="term" value="F:DNA binding"/>
    <property type="evidence" value="ECO:0007669"/>
    <property type="project" value="UniProtKB-UniRule"/>
</dbReference>
<dbReference type="GO" id="GO:0003899">
    <property type="term" value="F:DNA-directed RNA polymerase activity"/>
    <property type="evidence" value="ECO:0007669"/>
    <property type="project" value="UniProtKB-UniRule"/>
</dbReference>
<dbReference type="GO" id="GO:0046983">
    <property type="term" value="F:protein dimerization activity"/>
    <property type="evidence" value="ECO:0007669"/>
    <property type="project" value="InterPro"/>
</dbReference>
<dbReference type="GO" id="GO:0006351">
    <property type="term" value="P:DNA-templated transcription"/>
    <property type="evidence" value="ECO:0007669"/>
    <property type="project" value="UniProtKB-UniRule"/>
</dbReference>
<dbReference type="CDD" id="cd06928">
    <property type="entry name" value="RNAP_alpha_NTD"/>
    <property type="match status" value="1"/>
</dbReference>
<dbReference type="FunFam" id="1.10.150.20:FF:000001">
    <property type="entry name" value="DNA-directed RNA polymerase subunit alpha"/>
    <property type="match status" value="1"/>
</dbReference>
<dbReference type="FunFam" id="2.170.120.12:FF:000001">
    <property type="entry name" value="DNA-directed RNA polymerase subunit alpha"/>
    <property type="match status" value="1"/>
</dbReference>
<dbReference type="Gene3D" id="1.10.150.20">
    <property type="entry name" value="5' to 3' exonuclease, C-terminal subdomain"/>
    <property type="match status" value="1"/>
</dbReference>
<dbReference type="Gene3D" id="2.170.120.12">
    <property type="entry name" value="DNA-directed RNA polymerase, insert domain"/>
    <property type="match status" value="1"/>
</dbReference>
<dbReference type="Gene3D" id="3.30.1360.10">
    <property type="entry name" value="RNA polymerase, RBP11-like subunit"/>
    <property type="match status" value="1"/>
</dbReference>
<dbReference type="HAMAP" id="MF_00059">
    <property type="entry name" value="RNApol_bact_RpoA"/>
    <property type="match status" value="1"/>
</dbReference>
<dbReference type="InterPro" id="IPR011262">
    <property type="entry name" value="DNA-dir_RNA_pol_insert"/>
</dbReference>
<dbReference type="InterPro" id="IPR011263">
    <property type="entry name" value="DNA-dir_RNA_pol_RpoA/D/Rpb3"/>
</dbReference>
<dbReference type="InterPro" id="IPR011773">
    <property type="entry name" value="DNA-dir_RpoA"/>
</dbReference>
<dbReference type="InterPro" id="IPR036603">
    <property type="entry name" value="RBP11-like"/>
</dbReference>
<dbReference type="InterPro" id="IPR011260">
    <property type="entry name" value="RNAP_asu_C"/>
</dbReference>
<dbReference type="InterPro" id="IPR036643">
    <property type="entry name" value="RNApol_insert_sf"/>
</dbReference>
<dbReference type="NCBIfam" id="NF003513">
    <property type="entry name" value="PRK05182.1-2"/>
    <property type="match status" value="1"/>
</dbReference>
<dbReference type="NCBIfam" id="NF003515">
    <property type="entry name" value="PRK05182.2-1"/>
    <property type="match status" value="1"/>
</dbReference>
<dbReference type="NCBIfam" id="NF003518">
    <property type="entry name" value="PRK05182.2-4"/>
    <property type="match status" value="1"/>
</dbReference>
<dbReference type="NCBIfam" id="NF003519">
    <property type="entry name" value="PRK05182.2-5"/>
    <property type="match status" value="1"/>
</dbReference>
<dbReference type="NCBIfam" id="TIGR02027">
    <property type="entry name" value="rpoA"/>
    <property type="match status" value="1"/>
</dbReference>
<dbReference type="Pfam" id="PF01000">
    <property type="entry name" value="RNA_pol_A_bac"/>
    <property type="match status" value="1"/>
</dbReference>
<dbReference type="Pfam" id="PF03118">
    <property type="entry name" value="RNA_pol_A_CTD"/>
    <property type="match status" value="1"/>
</dbReference>
<dbReference type="Pfam" id="PF01193">
    <property type="entry name" value="RNA_pol_L"/>
    <property type="match status" value="1"/>
</dbReference>
<dbReference type="SMART" id="SM00662">
    <property type="entry name" value="RPOLD"/>
    <property type="match status" value="1"/>
</dbReference>
<dbReference type="SUPFAM" id="SSF47789">
    <property type="entry name" value="C-terminal domain of RNA polymerase alpha subunit"/>
    <property type="match status" value="1"/>
</dbReference>
<dbReference type="SUPFAM" id="SSF56553">
    <property type="entry name" value="Insert subdomain of RNA polymerase alpha subunit"/>
    <property type="match status" value="1"/>
</dbReference>
<dbReference type="SUPFAM" id="SSF55257">
    <property type="entry name" value="RBP11-like subunits of RNA polymerase"/>
    <property type="match status" value="1"/>
</dbReference>
<sequence length="311" mass="34207">MIEFEKPNITKIDENKDYGKFVIEPLERGYGTTLGNSLRRVLLASLPGAAVTSINIDGVLHEFDTVPGVREDVMQIILNIKGIAVKSYVEDEKIIELDVEGPAEVTAGDILTDSDIEIVNPDHYLFTIGEGSSLKATMTVNSGRGYVPADENKKDNAPVGTLAVDSIYTPVTKVNYQVEPARVGSNDGFDKLTLEILTNGTIIPEDALGLSARILTEHLDLFTNLTEIAKSTEVMKEADTESDDRILDRTIEELDLSVRSYNCLKRAGINTVHDLTEKSEAEMMKVRNLGRKSLEEVKLKLIDLGLGLKDK</sequence>
<reference key="1">
    <citation type="journal article" date="2001" name="J. Bacteriol.">
        <title>Genome of the bacterium Streptococcus pneumoniae strain R6.</title>
        <authorList>
            <person name="Hoskins J."/>
            <person name="Alborn W.E. Jr."/>
            <person name="Arnold J."/>
            <person name="Blaszczak L.C."/>
            <person name="Burgett S."/>
            <person name="DeHoff B.S."/>
            <person name="Estrem S.T."/>
            <person name="Fritz L."/>
            <person name="Fu D.-J."/>
            <person name="Fuller W."/>
            <person name="Geringer C."/>
            <person name="Gilmour R."/>
            <person name="Glass J.S."/>
            <person name="Khoja H."/>
            <person name="Kraft A.R."/>
            <person name="Lagace R.E."/>
            <person name="LeBlanc D.J."/>
            <person name="Lee L.N."/>
            <person name="Lefkowitz E.J."/>
            <person name="Lu J."/>
            <person name="Matsushima P."/>
            <person name="McAhren S.M."/>
            <person name="McHenney M."/>
            <person name="McLeaster K."/>
            <person name="Mundy C.W."/>
            <person name="Nicas T.I."/>
            <person name="Norris F.H."/>
            <person name="O'Gara M."/>
            <person name="Peery R.B."/>
            <person name="Robertson G.T."/>
            <person name="Rockey P."/>
            <person name="Sun P.-M."/>
            <person name="Winkler M.E."/>
            <person name="Yang Y."/>
            <person name="Young-Bellido M."/>
            <person name="Zhao G."/>
            <person name="Zook C.A."/>
            <person name="Baltz R.H."/>
            <person name="Jaskunas S.R."/>
            <person name="Rosteck P.R. Jr."/>
            <person name="Skatrud P.L."/>
            <person name="Glass J.I."/>
        </authorList>
    </citation>
    <scope>NUCLEOTIDE SEQUENCE [LARGE SCALE GENOMIC DNA]</scope>
    <source>
        <strain>ATCC BAA-255 / R6</strain>
    </source>
</reference>
<reference key="2">
    <citation type="journal article" date="2005" name="FEBS J.">
        <title>Characterization of a eukaryotic type serine/threonine protein kinase and protein phosphatase of Streptococcus pneumoniae and identification of kinase substrates.</title>
        <authorList>
            <person name="Novakova L."/>
            <person name="Saskova L."/>
            <person name="Pallova P."/>
            <person name="Janecek J."/>
            <person name="Novotna J."/>
            <person name="Ulrych A."/>
            <person name="Echenique J."/>
            <person name="Trombe M.C."/>
            <person name="Branny P."/>
        </authorList>
    </citation>
    <scope>IDENTIFICATION BY MASS SPECTROMETRY</scope>
</reference>
<reference key="3">
    <citation type="journal article" date="2010" name="J. Bacteriol.">
        <title>Identification of multiple substrates of the StkP Ser/Thr protein kinase in Streptococcus pneumoniae.</title>
        <authorList>
            <person name="Novakova L."/>
            <person name="Bezouskova S."/>
            <person name="Pompach P."/>
            <person name="Spidlova P."/>
            <person name="Saskova L."/>
            <person name="Weiser J."/>
            <person name="Branny P."/>
        </authorList>
    </citation>
    <scope>LACK OF PHOSPHORYLATION</scope>
    <scope>IDENTIFICATION BY MASS SPECTROMETRY</scope>
</reference>
<protein>
    <recommendedName>
        <fullName evidence="1">DNA-directed RNA polymerase subunit alpha</fullName>
        <shortName evidence="1">RNAP subunit alpha</shortName>
        <ecNumber evidence="1">2.7.7.6</ecNumber>
    </recommendedName>
    <alternativeName>
        <fullName evidence="1">RNA polymerase subunit alpha</fullName>
    </alternativeName>
    <alternativeName>
        <fullName evidence="1">Transcriptase subunit alpha</fullName>
    </alternativeName>
</protein>
<gene>
    <name evidence="1" type="primary">rpoA</name>
    <name type="ordered locus">spr0215</name>
</gene>
<keyword id="KW-0240">DNA-directed RNA polymerase</keyword>
<keyword id="KW-0548">Nucleotidyltransferase</keyword>
<keyword id="KW-1185">Reference proteome</keyword>
<keyword id="KW-0804">Transcription</keyword>
<keyword id="KW-0808">Transferase</keyword>
<comment type="function">
    <text evidence="1">DNA-dependent RNA polymerase catalyzes the transcription of DNA into RNA using the four ribonucleoside triphosphates as substrates.</text>
</comment>
<comment type="catalytic activity">
    <reaction evidence="1">
        <text>RNA(n) + a ribonucleoside 5'-triphosphate = RNA(n+1) + diphosphate</text>
        <dbReference type="Rhea" id="RHEA:21248"/>
        <dbReference type="Rhea" id="RHEA-COMP:14527"/>
        <dbReference type="Rhea" id="RHEA-COMP:17342"/>
        <dbReference type="ChEBI" id="CHEBI:33019"/>
        <dbReference type="ChEBI" id="CHEBI:61557"/>
        <dbReference type="ChEBI" id="CHEBI:140395"/>
        <dbReference type="EC" id="2.7.7.6"/>
    </reaction>
</comment>
<comment type="subunit">
    <text evidence="1">Homodimer. The RNAP catalytic core consists of 2 alpha, 1 beta, 1 beta' and 1 omega subunit. When a sigma factor is associated with the core the holoenzyme is formed, which can initiate transcription.</text>
</comment>
<comment type="domain">
    <text evidence="1">The N-terminal domain is essential for RNAP assembly and basal transcription, whereas the C-terminal domain is involved in interaction with transcriptional regulators and with upstream promoter elements.</text>
</comment>
<comment type="miscellaneous">
    <text evidence="2 3">Although RpoA was believed to be phosphorylated by StkP in vivo in a first study (PubMed:15720398), the same authors later showed that this protein is indeed not phosphorylated (PubMed:20453092).</text>
</comment>
<comment type="similarity">
    <text evidence="1">Belongs to the RNA polymerase alpha chain family.</text>
</comment>